<feature type="chain" id="PRO_1000057627" description="Peptide chain release factor 2">
    <location>
        <begin position="1"/>
        <end position="365"/>
    </location>
</feature>
<feature type="modified residue" description="N5-methylglutamine" evidence="2">
    <location>
        <position position="252"/>
    </location>
</feature>
<keyword id="KW-0963">Cytoplasm</keyword>
<keyword id="KW-0488">Methylation</keyword>
<keyword id="KW-0648">Protein biosynthesis</keyword>
<keyword id="KW-0688">Ribosomal frameshifting</keyword>
<organism>
    <name type="scientific">Yersinia pseudotuberculosis serotype O:1b (strain IP 31758)</name>
    <dbReference type="NCBI Taxonomy" id="349747"/>
    <lineage>
        <taxon>Bacteria</taxon>
        <taxon>Pseudomonadati</taxon>
        <taxon>Pseudomonadota</taxon>
        <taxon>Gammaproteobacteria</taxon>
        <taxon>Enterobacterales</taxon>
        <taxon>Yersiniaceae</taxon>
        <taxon>Yersinia</taxon>
    </lineage>
</organism>
<proteinExistence type="inferred from homology"/>
<sequence>MFEINPVKNRIQDLSDRTAVLRGYLDYDAKKERLEEVNAELEQPDVWNEPERAQALGKERSTLEEIVTTIDQLEQGLEDVSGLLELAVEADDEETFNETIAELEVLDGKLGQLEFRRMFSGEYDRANCYLDLQAGSGGTEAQDWASMLLRMYLRWAESRGFKTEIIEESDGDVAGLKSATVKIIGEYAFGWLRTETGVHRLVRKSPFDSGGRRHTSFSSAFVYPEVDDDIDIEINPADLRIDVYRASGAGGQHVNKTESAVRITHIPTNIVTQCQNDRSQHKNKDQAMKQLKAKLYEFEMQKKNADKQVLEDNKSDIGWGSQIRSYVLDDSRIKDLRTGVETRNTQAVLDGDLDKFIEASLKAGL</sequence>
<dbReference type="EMBL" id="CP000720">
    <property type="protein sequence ID" value="ABS47054.1"/>
    <property type="molecule type" value="Genomic_DNA"/>
</dbReference>
<dbReference type="RefSeq" id="WP_002228062.1">
    <property type="nucleotide sequence ID" value="NC_009708.1"/>
</dbReference>
<dbReference type="SMR" id="A7FF38"/>
<dbReference type="GeneID" id="57973751"/>
<dbReference type="KEGG" id="ypi:YpsIP31758_0882"/>
<dbReference type="HOGENOM" id="CLU_220733_1_0_6"/>
<dbReference type="Proteomes" id="UP000002412">
    <property type="component" value="Chromosome"/>
</dbReference>
<dbReference type="GO" id="GO:0005737">
    <property type="term" value="C:cytoplasm"/>
    <property type="evidence" value="ECO:0007669"/>
    <property type="project" value="UniProtKB-SubCell"/>
</dbReference>
<dbReference type="GO" id="GO:0016149">
    <property type="term" value="F:translation release factor activity, codon specific"/>
    <property type="evidence" value="ECO:0007669"/>
    <property type="project" value="UniProtKB-UniRule"/>
</dbReference>
<dbReference type="GO" id="GO:0075523">
    <property type="term" value="P:viral translational frameshifting"/>
    <property type="evidence" value="ECO:0007669"/>
    <property type="project" value="UniProtKB-KW"/>
</dbReference>
<dbReference type="FunFam" id="3.30.160.20:FF:000010">
    <property type="entry name" value="Peptide chain release factor 2"/>
    <property type="match status" value="1"/>
</dbReference>
<dbReference type="Gene3D" id="3.30.160.20">
    <property type="match status" value="1"/>
</dbReference>
<dbReference type="Gene3D" id="3.30.70.1660">
    <property type="match status" value="1"/>
</dbReference>
<dbReference type="Gene3D" id="1.20.58.410">
    <property type="entry name" value="Release factor"/>
    <property type="match status" value="1"/>
</dbReference>
<dbReference type="HAMAP" id="MF_00094">
    <property type="entry name" value="Rel_fac_2"/>
    <property type="match status" value="1"/>
</dbReference>
<dbReference type="InterPro" id="IPR005139">
    <property type="entry name" value="PCRF"/>
</dbReference>
<dbReference type="InterPro" id="IPR000352">
    <property type="entry name" value="Pep_chain_release_fac_I"/>
</dbReference>
<dbReference type="InterPro" id="IPR045853">
    <property type="entry name" value="Pep_chain_release_fac_I_sf"/>
</dbReference>
<dbReference type="InterPro" id="IPR004374">
    <property type="entry name" value="PrfB"/>
</dbReference>
<dbReference type="NCBIfam" id="TIGR00020">
    <property type="entry name" value="prfB"/>
    <property type="match status" value="1"/>
</dbReference>
<dbReference type="PANTHER" id="PTHR43116:SF3">
    <property type="entry name" value="CLASS I PEPTIDE CHAIN RELEASE FACTOR"/>
    <property type="match status" value="1"/>
</dbReference>
<dbReference type="PANTHER" id="PTHR43116">
    <property type="entry name" value="PEPTIDE CHAIN RELEASE FACTOR 2"/>
    <property type="match status" value="1"/>
</dbReference>
<dbReference type="Pfam" id="PF03462">
    <property type="entry name" value="PCRF"/>
    <property type="match status" value="1"/>
</dbReference>
<dbReference type="Pfam" id="PF00472">
    <property type="entry name" value="RF-1"/>
    <property type="match status" value="1"/>
</dbReference>
<dbReference type="SMART" id="SM00937">
    <property type="entry name" value="PCRF"/>
    <property type="match status" value="1"/>
</dbReference>
<dbReference type="SUPFAM" id="SSF75620">
    <property type="entry name" value="Release factor"/>
    <property type="match status" value="1"/>
</dbReference>
<dbReference type="PROSITE" id="PS00745">
    <property type="entry name" value="RF_PROK_I"/>
    <property type="match status" value="1"/>
</dbReference>
<gene>
    <name evidence="2" type="primary">prfB</name>
    <name type="ordered locus">YpsIP31758_0882</name>
</gene>
<accession>A7FF38</accession>
<evidence type="ECO:0000250" key="1"/>
<evidence type="ECO:0000255" key="2">
    <source>
        <dbReference type="HAMAP-Rule" id="MF_00094"/>
    </source>
</evidence>
<name>RF2_YERP3</name>
<reference key="1">
    <citation type="journal article" date="2007" name="PLoS Genet.">
        <title>The complete genome sequence of Yersinia pseudotuberculosis IP31758, the causative agent of Far East scarlet-like fever.</title>
        <authorList>
            <person name="Eppinger M."/>
            <person name="Rosovitz M.J."/>
            <person name="Fricke W.F."/>
            <person name="Rasko D.A."/>
            <person name="Kokorina G."/>
            <person name="Fayolle C."/>
            <person name="Lindler L.E."/>
            <person name="Carniel E."/>
            <person name="Ravel J."/>
        </authorList>
    </citation>
    <scope>NUCLEOTIDE SEQUENCE [LARGE SCALE GENOMIC DNA]</scope>
    <source>
        <strain>IP 31758</strain>
    </source>
</reference>
<protein>
    <recommendedName>
        <fullName evidence="2">Peptide chain release factor 2</fullName>
        <shortName evidence="2">RF-2</shortName>
    </recommendedName>
</protein>
<comment type="function">
    <text evidence="2">Peptide chain release factor 2 directs the termination of translation in response to the peptide chain termination codons UGA and UAA.</text>
</comment>
<comment type="subcellular location">
    <subcellularLocation>
        <location evidence="2">Cytoplasm</location>
    </subcellularLocation>
</comment>
<comment type="PTM">
    <text evidence="2">Methylated by PrmC. Methylation increases the termination efficiency of RF2.</text>
</comment>
<comment type="miscellaneous">
    <text evidence="1">The gene for this protein contains a UGA in-frame termination codon after Leu-25; a naturally occurring frameshift enables complete translation of RF-2. This provides a mechanism for the protein to regulate its own production (By similarity).</text>
</comment>
<comment type="similarity">
    <text evidence="2">Belongs to the prokaryotic/mitochondrial release factor family.</text>
</comment>